<accession>P80040</accession>
<accession>A9WH38</accession>
<dbReference type="EC" id="1.1.1.37" evidence="2"/>
<dbReference type="EMBL" id="X89038">
    <property type="protein sequence ID" value="CAA61436.1"/>
    <property type="molecule type" value="Genomic_DNA"/>
</dbReference>
<dbReference type="EMBL" id="CP000909">
    <property type="protein sequence ID" value="ABY34133.1"/>
    <property type="molecule type" value="Genomic_DNA"/>
</dbReference>
<dbReference type="RefSeq" id="WP_012256789.1">
    <property type="nucleotide sequence ID" value="NC_010175.1"/>
</dbReference>
<dbReference type="RefSeq" id="YP_001634522.1">
    <property type="nucleotide sequence ID" value="NC_010175.1"/>
</dbReference>
<dbReference type="PDB" id="1GUY">
    <property type="method" value="X-ray"/>
    <property type="resolution" value="2.20 A"/>
    <property type="chains" value="A/C=1-309"/>
</dbReference>
<dbReference type="PDB" id="1UR5">
    <property type="method" value="X-ray"/>
    <property type="resolution" value="1.75 A"/>
    <property type="chains" value="A/C=1-309"/>
</dbReference>
<dbReference type="PDB" id="1UXG">
    <property type="method" value="X-ray"/>
    <property type="resolution" value="1.90 A"/>
    <property type="chains" value="A/B=1-309"/>
</dbReference>
<dbReference type="PDB" id="1UXH">
    <property type="method" value="X-ray"/>
    <property type="resolution" value="2.10 A"/>
    <property type="chains" value="A/B=1-309"/>
</dbReference>
<dbReference type="PDB" id="1UXI">
    <property type="method" value="X-ray"/>
    <property type="resolution" value="2.10 A"/>
    <property type="chains" value="A/B=1-309"/>
</dbReference>
<dbReference type="PDB" id="1UXJ">
    <property type="method" value="X-ray"/>
    <property type="resolution" value="1.75 A"/>
    <property type="chains" value="A/C=1-309"/>
</dbReference>
<dbReference type="PDB" id="1UXK">
    <property type="method" value="X-ray"/>
    <property type="resolution" value="1.80 A"/>
    <property type="chains" value="A/C=1-309"/>
</dbReference>
<dbReference type="PDB" id="4CL3">
    <property type="method" value="X-ray"/>
    <property type="resolution" value="1.70 A"/>
    <property type="chains" value="A/D=1-309"/>
</dbReference>
<dbReference type="PDBsum" id="1GUY"/>
<dbReference type="PDBsum" id="1UR5"/>
<dbReference type="PDBsum" id="1UXG"/>
<dbReference type="PDBsum" id="1UXH"/>
<dbReference type="PDBsum" id="1UXI"/>
<dbReference type="PDBsum" id="1UXJ"/>
<dbReference type="PDBsum" id="1UXK"/>
<dbReference type="PDBsum" id="4CL3"/>
<dbReference type="SMR" id="P80040"/>
<dbReference type="FunCoup" id="P80040">
    <property type="interactions" value="306"/>
</dbReference>
<dbReference type="STRING" id="324602.Caur_0900"/>
<dbReference type="DrugBank" id="DB01677">
    <property type="generic name" value="Fumaric acid"/>
</dbReference>
<dbReference type="EnsemblBacteria" id="ABY34133">
    <property type="protein sequence ID" value="ABY34133"/>
    <property type="gene ID" value="Caur_0900"/>
</dbReference>
<dbReference type="KEGG" id="cau:Caur_0900"/>
<dbReference type="PATRIC" id="fig|324602.8.peg.1031"/>
<dbReference type="eggNOG" id="COG0039">
    <property type="taxonomic scope" value="Bacteria"/>
</dbReference>
<dbReference type="HOGENOM" id="CLU_045401_2_1_0"/>
<dbReference type="InParanoid" id="P80040"/>
<dbReference type="BRENDA" id="1.1.1.37">
    <property type="organism ID" value="1352"/>
</dbReference>
<dbReference type="EvolutionaryTrace" id="P80040"/>
<dbReference type="Proteomes" id="UP000002008">
    <property type="component" value="Chromosome"/>
</dbReference>
<dbReference type="GO" id="GO:0005737">
    <property type="term" value="C:cytoplasm"/>
    <property type="evidence" value="ECO:0000318"/>
    <property type="project" value="GO_Central"/>
</dbReference>
<dbReference type="GO" id="GO:0030060">
    <property type="term" value="F:L-malate dehydrogenase (NAD+) activity"/>
    <property type="evidence" value="ECO:0000318"/>
    <property type="project" value="GO_Central"/>
</dbReference>
<dbReference type="GO" id="GO:0019752">
    <property type="term" value="P:carboxylic acid metabolic process"/>
    <property type="evidence" value="ECO:0007669"/>
    <property type="project" value="InterPro"/>
</dbReference>
<dbReference type="GO" id="GO:0006099">
    <property type="term" value="P:tricarboxylic acid cycle"/>
    <property type="evidence" value="ECO:0007669"/>
    <property type="project" value="UniProtKB-UniRule"/>
</dbReference>
<dbReference type="CDD" id="cd01339">
    <property type="entry name" value="LDH-like_MDH"/>
    <property type="match status" value="1"/>
</dbReference>
<dbReference type="FunFam" id="3.40.50.720:FF:000018">
    <property type="entry name" value="Malate dehydrogenase"/>
    <property type="match status" value="1"/>
</dbReference>
<dbReference type="FunFam" id="3.90.110.10:FF:000004">
    <property type="entry name" value="Malate dehydrogenase"/>
    <property type="match status" value="1"/>
</dbReference>
<dbReference type="Gene3D" id="3.90.110.10">
    <property type="entry name" value="Lactate dehydrogenase/glycoside hydrolase, family 4, C-terminal"/>
    <property type="match status" value="1"/>
</dbReference>
<dbReference type="Gene3D" id="3.40.50.720">
    <property type="entry name" value="NAD(P)-binding Rossmann-like Domain"/>
    <property type="match status" value="1"/>
</dbReference>
<dbReference type="HAMAP" id="MF_00487">
    <property type="entry name" value="Malate_dehydrog_3"/>
    <property type="match status" value="1"/>
</dbReference>
<dbReference type="InterPro" id="IPR001557">
    <property type="entry name" value="L-lactate/malate_DH"/>
</dbReference>
<dbReference type="InterPro" id="IPR022383">
    <property type="entry name" value="Lactate/malate_DH_C"/>
</dbReference>
<dbReference type="InterPro" id="IPR001236">
    <property type="entry name" value="Lactate/malate_DH_N"/>
</dbReference>
<dbReference type="InterPro" id="IPR015955">
    <property type="entry name" value="Lactate_DH/Glyco_Ohase_4_C"/>
</dbReference>
<dbReference type="InterPro" id="IPR011275">
    <property type="entry name" value="Malate_DH_type3"/>
</dbReference>
<dbReference type="InterPro" id="IPR036291">
    <property type="entry name" value="NAD(P)-bd_dom_sf"/>
</dbReference>
<dbReference type="NCBIfam" id="TIGR01763">
    <property type="entry name" value="MalateDH_bact"/>
    <property type="match status" value="1"/>
</dbReference>
<dbReference type="NCBIfam" id="NF004863">
    <property type="entry name" value="PRK06223.1"/>
    <property type="match status" value="1"/>
</dbReference>
<dbReference type="PANTHER" id="PTHR43128">
    <property type="entry name" value="L-2-HYDROXYCARBOXYLATE DEHYDROGENASE (NAD(P)(+))"/>
    <property type="match status" value="1"/>
</dbReference>
<dbReference type="PANTHER" id="PTHR43128:SF16">
    <property type="entry name" value="L-LACTATE DEHYDROGENASE"/>
    <property type="match status" value="1"/>
</dbReference>
<dbReference type="Pfam" id="PF02866">
    <property type="entry name" value="Ldh_1_C"/>
    <property type="match status" value="1"/>
</dbReference>
<dbReference type="Pfam" id="PF00056">
    <property type="entry name" value="Ldh_1_N"/>
    <property type="match status" value="1"/>
</dbReference>
<dbReference type="PIRSF" id="PIRSF000102">
    <property type="entry name" value="Lac_mal_DH"/>
    <property type="match status" value="1"/>
</dbReference>
<dbReference type="PRINTS" id="PR00086">
    <property type="entry name" value="LLDHDRGNASE"/>
</dbReference>
<dbReference type="SUPFAM" id="SSF56327">
    <property type="entry name" value="LDH C-terminal domain-like"/>
    <property type="match status" value="1"/>
</dbReference>
<dbReference type="SUPFAM" id="SSF51735">
    <property type="entry name" value="NAD(P)-binding Rossmann-fold domains"/>
    <property type="match status" value="1"/>
</dbReference>
<reference key="1">
    <citation type="journal article" date="1996" name="Arch. Microbiol.">
        <title>Malate dehydrogenase from the green gliding bacterium Chloroflexus aurantiacus is phylogenetically related to lactic dehydrogenases.</title>
        <authorList>
            <person name="Synstad B."/>
            <person name="Emmerhoff O."/>
            <person name="Sirevag R."/>
        </authorList>
    </citation>
    <scope>NUCLEOTIDE SEQUENCE [GENOMIC DNA]</scope>
</reference>
<reference key="2">
    <citation type="journal article" date="2011" name="BMC Genomics">
        <title>Complete genome sequence of the filamentous anoxygenic phototrophic bacterium Chloroflexus aurantiacus.</title>
        <authorList>
            <person name="Tang K.H."/>
            <person name="Barry K."/>
            <person name="Chertkov O."/>
            <person name="Dalin E."/>
            <person name="Han C.S."/>
            <person name="Hauser L.J."/>
            <person name="Honchak B.M."/>
            <person name="Karbach L.E."/>
            <person name="Land M.L."/>
            <person name="Lapidus A."/>
            <person name="Larimer F.W."/>
            <person name="Mikhailova N."/>
            <person name="Pitluck S."/>
            <person name="Pierson B.K."/>
            <person name="Blankenship R.E."/>
        </authorList>
    </citation>
    <scope>NUCLEOTIDE SEQUENCE [LARGE SCALE GENOMIC DNA]</scope>
    <source>
        <strain>ATCC 29366 / DSM 635 / J-10-fl</strain>
    </source>
</reference>
<reference key="3">
    <citation type="journal article" date="1988" name="J. Bacteriol.">
        <title>Malate dehydrogenase from the thermophilic green bacterium Chloroflexus aurantiacus: purification, molecular weight, amino acid composition, and partial amino acid sequence.</title>
        <authorList>
            <person name="Rolstad A.K."/>
            <person name="Howland E."/>
            <person name="Sirevag R."/>
        </authorList>
    </citation>
    <scope>PROTEIN SEQUENCE OF 1-35</scope>
    <scope>SUBUNIT</scope>
</reference>
<reference key="4">
    <citation type="journal article" date="2002" name="J. Mol. Biol.">
        <title>Structural basis for thermophilic protein stability: structures of thermophilic and mesophilic malate dehydrogenases.</title>
        <authorList>
            <person name="Dalhus B."/>
            <person name="Saarinen M."/>
            <person name="Sauer U.H."/>
            <person name="Eklund P."/>
            <person name="Johansson K."/>
            <person name="Karlsson A."/>
            <person name="Ramaswamy S."/>
            <person name="Bjoerk A."/>
            <person name="Synstad B."/>
            <person name="Naterstad K."/>
            <person name="Sirevaag R."/>
            <person name="Eklund H."/>
        </authorList>
    </citation>
    <scope>X-RAY CRYSTALLOGRAPHY (2.2 ANGSTROMS) OF 11-306 IN COMPLEX WITH NAD</scope>
    <scope>SUBUNIT</scope>
</reference>
<reference key="5">
    <citation type="journal article" date="2003" name="J. Mol. Biol.">
        <title>Stabilization of a tetrameric malate dehydrogenase by introduction of a disulfide bridge at the dimer-dimer interface.</title>
        <authorList>
            <person name="Bjoerk A."/>
            <person name="Dalhus B."/>
            <person name="Mantzilas D."/>
            <person name="Eijsink V.G.H."/>
            <person name="Sirevaag R."/>
        </authorList>
    </citation>
    <scope>X-RAY CRYSTALLOGRAPHY (1.75 ANGSTROMS) OF MUTANT CYS-187 IN COMPLEX WITH NAD AND SUBSTRATE ANALOG</scope>
    <scope>SUBUNIT</scope>
</reference>
<sequence length="309" mass="32751">MRKKISIIGAGFVGSTTAHWLAAKELGDIVLLDFVEGVPQGKALDLYEASPIEGFDVRVTGTNNYADTANSDVIVVTSGAPRKPGMSREDLIKVNADITRACISQAAPLSPNAVIIMVNNPLDAMTYLAAEVSGFPKERVIGQAGVLDAARYRTFIAMEAGVSVEDVQAMLMGGHGDEMVPLPRFSTISGIPVSEFIAPDRLAQIVERTRKGGGEIVNLLKTGSAYYAPAAATAQMVEAVLKDKKRVMPVAAYLTGQYGLNDIYFGVPVILGAGGVEKILELPLNEEEMALLNASAKAVRATLDTLKSL</sequence>
<comment type="function">
    <text evidence="2">Catalyzes the reversible oxidation of malate to oxaloacetate.</text>
</comment>
<comment type="catalytic activity">
    <reaction evidence="2">
        <text>(S)-malate + NAD(+) = oxaloacetate + NADH + H(+)</text>
        <dbReference type="Rhea" id="RHEA:21432"/>
        <dbReference type="ChEBI" id="CHEBI:15378"/>
        <dbReference type="ChEBI" id="CHEBI:15589"/>
        <dbReference type="ChEBI" id="CHEBI:16452"/>
        <dbReference type="ChEBI" id="CHEBI:57540"/>
        <dbReference type="ChEBI" id="CHEBI:57945"/>
        <dbReference type="EC" id="1.1.1.37"/>
    </reaction>
</comment>
<comment type="subunit">
    <text evidence="3 4 5">Homotetramer (active enzyme); homodimer and homotrimer at temperatures lower than 55 degrees Celsius (inactive forms).</text>
</comment>
<comment type="similarity">
    <text evidence="2">Belongs to the LDH/MDH superfamily. MDH type 3 family.</text>
</comment>
<gene>
    <name evidence="2" type="primary">mdh</name>
    <name type="ordered locus">Caur_0900</name>
</gene>
<protein>
    <recommendedName>
        <fullName evidence="2">Malate dehydrogenase</fullName>
        <ecNumber evidence="2">1.1.1.37</ecNumber>
    </recommendedName>
</protein>
<organism>
    <name type="scientific">Chloroflexus aurantiacus (strain ATCC 29366 / DSM 635 / J-10-fl)</name>
    <dbReference type="NCBI Taxonomy" id="324602"/>
    <lineage>
        <taxon>Bacteria</taxon>
        <taxon>Bacillati</taxon>
        <taxon>Chloroflexota</taxon>
        <taxon>Chloroflexia</taxon>
        <taxon>Chloroflexales</taxon>
        <taxon>Chloroflexineae</taxon>
        <taxon>Chloroflexaceae</taxon>
        <taxon>Chloroflexus</taxon>
    </lineage>
</organism>
<name>MDH_CHLAA</name>
<feature type="chain" id="PRO_0000113447" description="Malate dehydrogenase">
    <location>
        <begin position="1"/>
        <end position="309"/>
    </location>
</feature>
<feature type="active site" description="Proton acceptor" evidence="1 2">
    <location>
        <position position="175"/>
    </location>
</feature>
<feature type="binding site" evidence="2 3 4">
    <location>
        <begin position="9"/>
        <end position="14"/>
    </location>
    <ligand>
        <name>NAD(+)</name>
        <dbReference type="ChEBI" id="CHEBI:57540"/>
    </ligand>
</feature>
<feature type="binding site" evidence="2 3 4">
    <location>
        <position position="33"/>
    </location>
    <ligand>
        <name>NAD(+)</name>
        <dbReference type="ChEBI" id="CHEBI:57540"/>
    </ligand>
</feature>
<feature type="binding site" evidence="1 2">
    <location>
        <position position="82"/>
    </location>
    <ligand>
        <name>substrate</name>
    </ligand>
</feature>
<feature type="binding site" evidence="1 2">
    <location>
        <position position="88"/>
    </location>
    <ligand>
        <name>substrate</name>
    </ligand>
</feature>
<feature type="binding site" evidence="1 2">
    <location>
        <position position="95"/>
    </location>
    <ligand>
        <name>NAD(+)</name>
        <dbReference type="ChEBI" id="CHEBI:57540"/>
    </ligand>
</feature>
<feature type="binding site" evidence="2 3 4">
    <location>
        <begin position="118"/>
        <end position="120"/>
    </location>
    <ligand>
        <name>NAD(+)</name>
        <dbReference type="ChEBI" id="CHEBI:57540"/>
    </ligand>
</feature>
<feature type="binding site" evidence="1 2">
    <location>
        <position position="120"/>
    </location>
    <ligand>
        <name>substrate</name>
    </ligand>
</feature>
<feature type="binding site" evidence="1 2">
    <location>
        <position position="151"/>
    </location>
    <ligand>
        <name>substrate</name>
    </ligand>
</feature>
<feature type="mutagenesis site" description="Forms an intersubunit disulfide bridge, which makes the enzyme more resistant to thermal denaturation. The mutation does not alter the quaternary structure of the enzyme.">
    <original>T</original>
    <variation>C</variation>
    <location>
        <position position="187"/>
    </location>
</feature>
<feature type="sequence conflict" description="In Ref. 1; CAA61436 and 3." evidence="6" ref="1 3">
    <original>F</original>
    <variation>I</variation>
    <location>
        <position position="34"/>
    </location>
</feature>
<feature type="strand" evidence="7">
    <location>
        <begin position="4"/>
        <end position="8"/>
    </location>
</feature>
<feature type="helix" evidence="7">
    <location>
        <begin position="12"/>
        <end position="23"/>
    </location>
</feature>
<feature type="strand" evidence="7">
    <location>
        <begin position="27"/>
        <end position="32"/>
    </location>
</feature>
<feature type="strand" evidence="7">
    <location>
        <begin position="34"/>
        <end position="37"/>
    </location>
</feature>
<feature type="helix" evidence="7">
    <location>
        <begin position="38"/>
        <end position="47"/>
    </location>
</feature>
<feature type="helix" evidence="7">
    <location>
        <begin position="50"/>
        <end position="53"/>
    </location>
</feature>
<feature type="strand" evidence="7">
    <location>
        <begin position="59"/>
        <end position="63"/>
    </location>
</feature>
<feature type="helix" evidence="7">
    <location>
        <begin position="65"/>
        <end position="68"/>
    </location>
</feature>
<feature type="strand" evidence="7">
    <location>
        <begin position="72"/>
        <end position="76"/>
    </location>
</feature>
<feature type="helix" evidence="7">
    <location>
        <begin position="90"/>
        <end position="106"/>
    </location>
</feature>
<feature type="helix" evidence="7">
    <location>
        <begin position="107"/>
        <end position="109"/>
    </location>
</feature>
<feature type="strand" evidence="7">
    <location>
        <begin position="114"/>
        <end position="117"/>
    </location>
</feature>
<feature type="strand" evidence="8">
    <location>
        <begin position="119"/>
        <end position="121"/>
    </location>
</feature>
<feature type="helix" evidence="7">
    <location>
        <begin position="122"/>
        <end position="133"/>
    </location>
</feature>
<feature type="helix" evidence="7">
    <location>
        <begin position="137"/>
        <end position="139"/>
    </location>
</feature>
<feature type="strand" evidence="7">
    <location>
        <begin position="140"/>
        <end position="142"/>
    </location>
</feature>
<feature type="helix" evidence="7">
    <location>
        <begin position="145"/>
        <end position="160"/>
    </location>
</feature>
<feature type="helix" evidence="7">
    <location>
        <begin position="164"/>
        <end position="166"/>
    </location>
</feature>
<feature type="strand" evidence="7">
    <location>
        <begin position="167"/>
        <end position="169"/>
    </location>
</feature>
<feature type="strand" evidence="9">
    <location>
        <begin position="172"/>
        <end position="175"/>
    </location>
</feature>
<feature type="helix" evidence="7">
    <location>
        <begin position="176"/>
        <end position="178"/>
    </location>
</feature>
<feature type="helix" evidence="7">
    <location>
        <begin position="183"/>
        <end position="185"/>
    </location>
</feature>
<feature type="strand" evidence="7">
    <location>
        <begin position="186"/>
        <end position="188"/>
    </location>
</feature>
<feature type="helix" evidence="7">
    <location>
        <begin position="193"/>
        <end position="195"/>
    </location>
</feature>
<feature type="helix" evidence="7">
    <location>
        <begin position="199"/>
        <end position="210"/>
    </location>
</feature>
<feature type="helix" evidence="7">
    <location>
        <begin position="212"/>
        <end position="220"/>
    </location>
</feature>
<feature type="strand" evidence="8">
    <location>
        <begin position="221"/>
        <end position="223"/>
    </location>
</feature>
<feature type="helix" evidence="7">
    <location>
        <begin position="227"/>
        <end position="241"/>
    </location>
</feature>
<feature type="strand" evidence="7">
    <location>
        <begin position="246"/>
        <end position="256"/>
    </location>
</feature>
<feature type="helix" evidence="7">
    <location>
        <begin position="257"/>
        <end position="259"/>
    </location>
</feature>
<feature type="strand" evidence="7">
    <location>
        <begin position="261"/>
        <end position="272"/>
    </location>
</feature>
<feature type="strand" evidence="7">
    <location>
        <begin position="275"/>
        <end position="279"/>
    </location>
</feature>
<feature type="helix" evidence="7">
    <location>
        <begin position="286"/>
        <end position="306"/>
    </location>
</feature>
<keyword id="KW-0002">3D-structure</keyword>
<keyword id="KW-0903">Direct protein sequencing</keyword>
<keyword id="KW-0520">NAD</keyword>
<keyword id="KW-0560">Oxidoreductase</keyword>
<keyword id="KW-1185">Reference proteome</keyword>
<keyword id="KW-0816">Tricarboxylic acid cycle</keyword>
<proteinExistence type="evidence at protein level"/>
<evidence type="ECO:0000250" key="1">
    <source>
        <dbReference type="UniProtKB" id="P61889"/>
    </source>
</evidence>
<evidence type="ECO:0000255" key="2">
    <source>
        <dbReference type="HAMAP-Rule" id="MF_00487"/>
    </source>
</evidence>
<evidence type="ECO:0000269" key="3">
    <source>
    </source>
</evidence>
<evidence type="ECO:0000269" key="4">
    <source>
    </source>
</evidence>
<evidence type="ECO:0000269" key="5">
    <source>
    </source>
</evidence>
<evidence type="ECO:0000305" key="6"/>
<evidence type="ECO:0007829" key="7">
    <source>
        <dbReference type="PDB" id="1UR5"/>
    </source>
</evidence>
<evidence type="ECO:0007829" key="8">
    <source>
        <dbReference type="PDB" id="1UXJ"/>
    </source>
</evidence>
<evidence type="ECO:0007829" key="9">
    <source>
        <dbReference type="PDB" id="1UXK"/>
    </source>
</evidence>